<sequence length="241" mass="27497">MSYNGKDLGELQLKCHQSMLQAGAVFENCTFVNGDVLLEIPSFFIESLQFHYLINQSEKISLKLIFWNELVYLLGLNDTSKASATTSFQQGQIETKPDLTLFINELLTTKKEHKKLDNDNRESEIPFSDTRFHDEFDRESRACLHRSEFPKNPHAFLAQDLPHGLPHRRAALPCEALGFHPNVGDYFDWYPHRPNHFGGKFDGHSRGRGAGRGGFCGRHGRGGFGKRSGLHGCREEFWMQV</sequence>
<reference key="1">
    <citation type="journal article" date="2002" name="Nature">
        <title>The genome sequence of Schizosaccharomyces pombe.</title>
        <authorList>
            <person name="Wood V."/>
            <person name="Gwilliam R."/>
            <person name="Rajandream M.A."/>
            <person name="Lyne M.H."/>
            <person name="Lyne R."/>
            <person name="Stewart A."/>
            <person name="Sgouros J.G."/>
            <person name="Peat N."/>
            <person name="Hayles J."/>
            <person name="Baker S.G."/>
            <person name="Basham D."/>
            <person name="Bowman S."/>
            <person name="Brooks K."/>
            <person name="Brown D."/>
            <person name="Brown S."/>
            <person name="Chillingworth T."/>
            <person name="Churcher C.M."/>
            <person name="Collins M."/>
            <person name="Connor R."/>
            <person name="Cronin A."/>
            <person name="Davis P."/>
            <person name="Feltwell T."/>
            <person name="Fraser A."/>
            <person name="Gentles S."/>
            <person name="Goble A."/>
            <person name="Hamlin N."/>
            <person name="Harris D.E."/>
            <person name="Hidalgo J."/>
            <person name="Hodgson G."/>
            <person name="Holroyd S."/>
            <person name="Hornsby T."/>
            <person name="Howarth S."/>
            <person name="Huckle E.J."/>
            <person name="Hunt S."/>
            <person name="Jagels K."/>
            <person name="James K.D."/>
            <person name="Jones L."/>
            <person name="Jones M."/>
            <person name="Leather S."/>
            <person name="McDonald S."/>
            <person name="McLean J."/>
            <person name="Mooney P."/>
            <person name="Moule S."/>
            <person name="Mungall K.L."/>
            <person name="Murphy L.D."/>
            <person name="Niblett D."/>
            <person name="Odell C."/>
            <person name="Oliver K."/>
            <person name="O'Neil S."/>
            <person name="Pearson D."/>
            <person name="Quail M.A."/>
            <person name="Rabbinowitsch E."/>
            <person name="Rutherford K.M."/>
            <person name="Rutter S."/>
            <person name="Saunders D."/>
            <person name="Seeger K."/>
            <person name="Sharp S."/>
            <person name="Skelton J."/>
            <person name="Simmonds M.N."/>
            <person name="Squares R."/>
            <person name="Squares S."/>
            <person name="Stevens K."/>
            <person name="Taylor K."/>
            <person name="Taylor R.G."/>
            <person name="Tivey A."/>
            <person name="Walsh S.V."/>
            <person name="Warren T."/>
            <person name="Whitehead S."/>
            <person name="Woodward J.R."/>
            <person name="Volckaert G."/>
            <person name="Aert R."/>
            <person name="Robben J."/>
            <person name="Grymonprez B."/>
            <person name="Weltjens I."/>
            <person name="Vanstreels E."/>
            <person name="Rieger M."/>
            <person name="Schaefer M."/>
            <person name="Mueller-Auer S."/>
            <person name="Gabel C."/>
            <person name="Fuchs M."/>
            <person name="Duesterhoeft A."/>
            <person name="Fritzc C."/>
            <person name="Holzer E."/>
            <person name="Moestl D."/>
            <person name="Hilbert H."/>
            <person name="Borzym K."/>
            <person name="Langer I."/>
            <person name="Beck A."/>
            <person name="Lehrach H."/>
            <person name="Reinhardt R."/>
            <person name="Pohl T.M."/>
            <person name="Eger P."/>
            <person name="Zimmermann W."/>
            <person name="Wedler H."/>
            <person name="Wambutt R."/>
            <person name="Purnelle B."/>
            <person name="Goffeau A."/>
            <person name="Cadieu E."/>
            <person name="Dreano S."/>
            <person name="Gloux S."/>
            <person name="Lelaure V."/>
            <person name="Mottier S."/>
            <person name="Galibert F."/>
            <person name="Aves S.J."/>
            <person name="Xiang Z."/>
            <person name="Hunt C."/>
            <person name="Moore K."/>
            <person name="Hurst S.M."/>
            <person name="Lucas M."/>
            <person name="Rochet M."/>
            <person name="Gaillardin C."/>
            <person name="Tallada V.A."/>
            <person name="Garzon A."/>
            <person name="Thode G."/>
            <person name="Daga R.R."/>
            <person name="Cruzado L."/>
            <person name="Jimenez J."/>
            <person name="Sanchez M."/>
            <person name="del Rey F."/>
            <person name="Benito J."/>
            <person name="Dominguez A."/>
            <person name="Revuelta J.L."/>
            <person name="Moreno S."/>
            <person name="Armstrong J."/>
            <person name="Forsburg S.L."/>
            <person name="Cerutti L."/>
            <person name="Lowe T."/>
            <person name="McCombie W.R."/>
            <person name="Paulsen I."/>
            <person name="Potashkin J."/>
            <person name="Shpakovski G.V."/>
            <person name="Ussery D."/>
            <person name="Barrell B.G."/>
            <person name="Nurse P."/>
        </authorList>
    </citation>
    <scope>NUCLEOTIDE SEQUENCE [LARGE SCALE GENOMIC DNA]</scope>
    <source>
        <strain>972 / ATCC 24843</strain>
    </source>
</reference>
<reference key="2">
    <citation type="journal article" date="2006" name="Nat. Biotechnol.">
        <title>ORFeome cloning and global analysis of protein localization in the fission yeast Schizosaccharomyces pombe.</title>
        <authorList>
            <person name="Matsuyama A."/>
            <person name="Arai R."/>
            <person name="Yashiroda Y."/>
            <person name="Shirai A."/>
            <person name="Kamata A."/>
            <person name="Sekido S."/>
            <person name="Kobayashi Y."/>
            <person name="Hashimoto A."/>
            <person name="Hamamoto M."/>
            <person name="Hiraoka Y."/>
            <person name="Horinouchi S."/>
            <person name="Yoshida M."/>
        </authorList>
    </citation>
    <scope>SUBCELLULAR LOCATION [LARGE SCALE ANALYSIS]</scope>
</reference>
<dbReference type="EMBL" id="CU329671">
    <property type="protein sequence ID" value="CAB68658.1"/>
    <property type="molecule type" value="Genomic_DNA"/>
</dbReference>
<dbReference type="PIR" id="T50406">
    <property type="entry name" value="T50406"/>
</dbReference>
<dbReference type="BioGRID" id="277846">
    <property type="interactions" value="7"/>
</dbReference>
<dbReference type="PaxDb" id="4896-SPBP4G3.03.1"/>
<dbReference type="EnsemblFungi" id="SPBP4G3.03.1">
    <property type="protein sequence ID" value="SPBP4G3.03.1:pep"/>
    <property type="gene ID" value="SPBP4G3.03"/>
</dbReference>
<dbReference type="KEGG" id="spo:2541335"/>
<dbReference type="PomBase" id="SPBP4G3.03"/>
<dbReference type="VEuPathDB" id="FungiDB:SPBP4G3.03"/>
<dbReference type="HOGENOM" id="CLU_1152324_0_0_1"/>
<dbReference type="InParanoid" id="Q9P7U7"/>
<dbReference type="PRO" id="PR:Q9P7U7"/>
<dbReference type="Proteomes" id="UP000002485">
    <property type="component" value="Chromosome II"/>
</dbReference>
<dbReference type="GO" id="GO:0005829">
    <property type="term" value="C:cytosol"/>
    <property type="evidence" value="ECO:0007005"/>
    <property type="project" value="PomBase"/>
</dbReference>
<dbReference type="GO" id="GO:0005634">
    <property type="term" value="C:nucleus"/>
    <property type="evidence" value="ECO:0007005"/>
    <property type="project" value="PomBase"/>
</dbReference>
<dbReference type="GO" id="GO:0006511">
    <property type="term" value="P:ubiquitin-dependent protein catabolic process"/>
    <property type="evidence" value="ECO:0000266"/>
    <property type="project" value="PomBase"/>
</dbReference>
<accession>Q9P7U7</accession>
<name>YP13_SCHPO</name>
<protein>
    <recommendedName>
        <fullName>Uncharacterized protein P4G3.03</fullName>
    </recommendedName>
</protein>
<proteinExistence type="predicted"/>
<feature type="chain" id="PRO_0000350769" description="Uncharacterized protein P4G3.03">
    <location>
        <begin position="1"/>
        <end position="241"/>
    </location>
</feature>
<gene>
    <name type="ORF">SPBP4G3.03</name>
</gene>
<keyword id="KW-0963">Cytoplasm</keyword>
<keyword id="KW-0539">Nucleus</keyword>
<keyword id="KW-1185">Reference proteome</keyword>
<evidence type="ECO:0000269" key="1">
    <source>
    </source>
</evidence>
<comment type="subcellular location">
    <subcellularLocation>
        <location evidence="1">Cytoplasm</location>
    </subcellularLocation>
    <subcellularLocation>
        <location evidence="1">Nucleus</location>
    </subcellularLocation>
</comment>
<organism>
    <name type="scientific">Schizosaccharomyces pombe (strain 972 / ATCC 24843)</name>
    <name type="common">Fission yeast</name>
    <dbReference type="NCBI Taxonomy" id="284812"/>
    <lineage>
        <taxon>Eukaryota</taxon>
        <taxon>Fungi</taxon>
        <taxon>Dikarya</taxon>
        <taxon>Ascomycota</taxon>
        <taxon>Taphrinomycotina</taxon>
        <taxon>Schizosaccharomycetes</taxon>
        <taxon>Schizosaccharomycetales</taxon>
        <taxon>Schizosaccharomycetaceae</taxon>
        <taxon>Schizosaccharomyces</taxon>
    </lineage>
</organism>